<accession>P81688</accession>
<accession>B4HZP1</accession>
<keyword id="KW-0027">Amidation</keyword>
<keyword id="KW-0044">Antibiotic</keyword>
<keyword id="KW-0929">Antimicrobial</keyword>
<keyword id="KW-0391">Immunity</keyword>
<keyword id="KW-0399">Innate immunity</keyword>
<keyword id="KW-1185">Reference proteome</keyword>
<keyword id="KW-0964">Secreted</keyword>
<keyword id="KW-0732">Signal</keyword>
<evidence type="ECO:0000250" key="1"/>
<evidence type="ECO:0000255" key="2"/>
<evidence type="ECO:0000305" key="3"/>
<sequence>MNFYNIFVFVALILAITIGQSEAGWLKKIGKKIERVGQHTRDATIQGLGVAQQAANVAATARG</sequence>
<name>CECA1_DROSE</name>
<protein>
    <recommendedName>
        <fullName>Cecropin-A1</fullName>
    </recommendedName>
</protein>
<organism>
    <name type="scientific">Drosophila sechellia</name>
    <name type="common">Fruit fly</name>
    <dbReference type="NCBI Taxonomy" id="7238"/>
    <lineage>
        <taxon>Eukaryota</taxon>
        <taxon>Metazoa</taxon>
        <taxon>Ecdysozoa</taxon>
        <taxon>Arthropoda</taxon>
        <taxon>Hexapoda</taxon>
        <taxon>Insecta</taxon>
        <taxon>Pterygota</taxon>
        <taxon>Neoptera</taxon>
        <taxon>Endopterygota</taxon>
        <taxon>Diptera</taxon>
        <taxon>Brachycera</taxon>
        <taxon>Muscomorpha</taxon>
        <taxon>Ephydroidea</taxon>
        <taxon>Drosophilidae</taxon>
        <taxon>Drosophila</taxon>
        <taxon>Sophophora</taxon>
    </lineage>
</organism>
<comment type="function">
    <text evidence="1">Cecropins have lytic and antibacterial activity against several Gram-positive and Gram-negative bacteria.</text>
</comment>
<comment type="subcellular location">
    <subcellularLocation>
        <location>Secreted</location>
    </subcellularLocation>
</comment>
<comment type="similarity">
    <text evidence="3">Belongs to the cecropin family.</text>
</comment>
<dbReference type="EMBL" id="Y16862">
    <property type="protein sequence ID" value="CAA76483.1"/>
    <property type="molecule type" value="Genomic_DNA"/>
</dbReference>
<dbReference type="EMBL" id="CH480819">
    <property type="protein sequence ID" value="EDW53498.1"/>
    <property type="molecule type" value="Genomic_DNA"/>
</dbReference>
<dbReference type="SMR" id="P81688"/>
<dbReference type="STRING" id="7238.P81688"/>
<dbReference type="EnsemblMetazoa" id="FBtr0195855">
    <property type="protein sequence ID" value="FBpp0194347"/>
    <property type="gene ID" value="FBgn0025653"/>
</dbReference>
<dbReference type="EnsemblMetazoa" id="XM_002037303.2">
    <property type="protein sequence ID" value="XP_002037339.1"/>
    <property type="gene ID" value="LOC6612845"/>
</dbReference>
<dbReference type="GeneID" id="6612845"/>
<dbReference type="KEGG" id="dse:6612845"/>
<dbReference type="HOGENOM" id="CLU_187909_1_0_1"/>
<dbReference type="OMA" id="NRIFVFV"/>
<dbReference type="OrthoDB" id="58805at7215"/>
<dbReference type="PhylomeDB" id="P81688"/>
<dbReference type="Proteomes" id="UP000001292">
    <property type="component" value="Unassembled WGS sequence"/>
</dbReference>
<dbReference type="GO" id="GO:0005576">
    <property type="term" value="C:extracellular region"/>
    <property type="evidence" value="ECO:0000250"/>
    <property type="project" value="UniProtKB"/>
</dbReference>
<dbReference type="GO" id="GO:0005615">
    <property type="term" value="C:extracellular space"/>
    <property type="evidence" value="ECO:0007669"/>
    <property type="project" value="EnsemblMetazoa"/>
</dbReference>
<dbReference type="GO" id="GO:0019731">
    <property type="term" value="P:antibacterial humoral response"/>
    <property type="evidence" value="ECO:0007669"/>
    <property type="project" value="EnsemblMetazoa"/>
</dbReference>
<dbReference type="GO" id="GO:0050829">
    <property type="term" value="P:defense response to Gram-negative bacterium"/>
    <property type="evidence" value="ECO:0007669"/>
    <property type="project" value="EnsemblMetazoa"/>
</dbReference>
<dbReference type="GO" id="GO:0050830">
    <property type="term" value="P:defense response to Gram-positive bacterium"/>
    <property type="evidence" value="ECO:0007669"/>
    <property type="project" value="EnsemblMetazoa"/>
</dbReference>
<dbReference type="GO" id="GO:0002213">
    <property type="term" value="P:defense response to insect"/>
    <property type="evidence" value="ECO:0007669"/>
    <property type="project" value="EnsemblMetazoa"/>
</dbReference>
<dbReference type="GO" id="GO:0051607">
    <property type="term" value="P:defense response to virus"/>
    <property type="evidence" value="ECO:0007669"/>
    <property type="project" value="EnsemblMetazoa"/>
</dbReference>
<dbReference type="GO" id="GO:0045087">
    <property type="term" value="P:innate immune response"/>
    <property type="evidence" value="ECO:0007669"/>
    <property type="project" value="UniProtKB-KW"/>
</dbReference>
<dbReference type="GO" id="GO:0140460">
    <property type="term" value="P:response to Gram-negative bacterium"/>
    <property type="evidence" value="ECO:0007669"/>
    <property type="project" value="EnsemblMetazoa"/>
</dbReference>
<dbReference type="InterPro" id="IPR000875">
    <property type="entry name" value="Cecropin"/>
</dbReference>
<dbReference type="InterPro" id="IPR020400">
    <property type="entry name" value="Cecropin_insect"/>
</dbReference>
<dbReference type="PANTHER" id="PTHR38329">
    <property type="entry name" value="CECROPIN-A1-RELATED"/>
    <property type="match status" value="1"/>
</dbReference>
<dbReference type="PANTHER" id="PTHR38329:SF1">
    <property type="entry name" value="CECROPIN-A1-RELATED"/>
    <property type="match status" value="1"/>
</dbReference>
<dbReference type="Pfam" id="PF00272">
    <property type="entry name" value="Cecropin"/>
    <property type="match status" value="1"/>
</dbReference>
<dbReference type="PROSITE" id="PS00268">
    <property type="entry name" value="CECROPIN"/>
    <property type="match status" value="1"/>
</dbReference>
<gene>
    <name type="primary">CecA1</name>
    <name type="ORF">GM12870</name>
</gene>
<feature type="signal peptide" evidence="2">
    <location>
        <begin position="1"/>
        <end position="23"/>
    </location>
</feature>
<feature type="chain" id="PRO_0000004841" description="Cecropin-A1">
    <location>
        <begin position="24"/>
        <end position="62"/>
    </location>
</feature>
<feature type="modified residue" description="Arginine amide" evidence="1">
    <location>
        <position position="62"/>
    </location>
</feature>
<reference key="1">
    <citation type="journal article" date="1998" name="Genetics">
        <title>Molecular evolution of the Cecropin multigene family in Drosophila: functional genes vs pseudogenes.</title>
        <authorList>
            <person name="Ramos-Onsins S."/>
            <person name="Aguade M."/>
        </authorList>
    </citation>
    <scope>NUCLEOTIDE SEQUENCE [GENOMIC DNA]</scope>
    <source>
        <strain>Montemayor</strain>
    </source>
</reference>
<reference key="2">
    <citation type="journal article" date="2007" name="Nature">
        <title>Evolution of genes and genomes on the Drosophila phylogeny.</title>
        <authorList>
            <consortium name="Drosophila 12 genomes consortium"/>
        </authorList>
    </citation>
    <scope>NUCLEOTIDE SEQUENCE [LARGE SCALE GENOMIC DNA]</scope>
    <source>
        <strain>Rob3c / Tucson 14021-0248.25</strain>
    </source>
</reference>
<proteinExistence type="inferred from homology"/>